<organism>
    <name type="scientific">Bacillus subtilis (strain 168)</name>
    <dbReference type="NCBI Taxonomy" id="224308"/>
    <lineage>
        <taxon>Bacteria</taxon>
        <taxon>Bacillati</taxon>
        <taxon>Bacillota</taxon>
        <taxon>Bacilli</taxon>
        <taxon>Bacillales</taxon>
        <taxon>Bacillaceae</taxon>
        <taxon>Bacillus</taxon>
    </lineage>
</organism>
<comment type="developmental stage">
    <text evidence="2">Expressed only in the mother cell compartment of sporulating cells.</text>
</comment>
<comment type="induction">
    <text>Expression is GerE and sigma K-dependent.</text>
</comment>
<reference key="1">
    <citation type="journal article" date="1997" name="Nature">
        <title>The complete genome sequence of the Gram-positive bacterium Bacillus subtilis.</title>
        <authorList>
            <person name="Kunst F."/>
            <person name="Ogasawara N."/>
            <person name="Moszer I."/>
            <person name="Albertini A.M."/>
            <person name="Alloni G."/>
            <person name="Azevedo V."/>
            <person name="Bertero M.G."/>
            <person name="Bessieres P."/>
            <person name="Bolotin A."/>
            <person name="Borchert S."/>
            <person name="Borriss R."/>
            <person name="Boursier L."/>
            <person name="Brans A."/>
            <person name="Braun M."/>
            <person name="Brignell S.C."/>
            <person name="Bron S."/>
            <person name="Brouillet S."/>
            <person name="Bruschi C.V."/>
            <person name="Caldwell B."/>
            <person name="Capuano V."/>
            <person name="Carter N.M."/>
            <person name="Choi S.-K."/>
            <person name="Codani J.-J."/>
            <person name="Connerton I.F."/>
            <person name="Cummings N.J."/>
            <person name="Daniel R.A."/>
            <person name="Denizot F."/>
            <person name="Devine K.M."/>
            <person name="Duesterhoeft A."/>
            <person name="Ehrlich S.D."/>
            <person name="Emmerson P.T."/>
            <person name="Entian K.-D."/>
            <person name="Errington J."/>
            <person name="Fabret C."/>
            <person name="Ferrari E."/>
            <person name="Foulger D."/>
            <person name="Fritz C."/>
            <person name="Fujita M."/>
            <person name="Fujita Y."/>
            <person name="Fuma S."/>
            <person name="Galizzi A."/>
            <person name="Galleron N."/>
            <person name="Ghim S.-Y."/>
            <person name="Glaser P."/>
            <person name="Goffeau A."/>
            <person name="Golightly E.J."/>
            <person name="Grandi G."/>
            <person name="Guiseppi G."/>
            <person name="Guy B.J."/>
            <person name="Haga K."/>
            <person name="Haiech J."/>
            <person name="Harwood C.R."/>
            <person name="Henaut A."/>
            <person name="Hilbert H."/>
            <person name="Holsappel S."/>
            <person name="Hosono S."/>
            <person name="Hullo M.-F."/>
            <person name="Itaya M."/>
            <person name="Jones L.-M."/>
            <person name="Joris B."/>
            <person name="Karamata D."/>
            <person name="Kasahara Y."/>
            <person name="Klaerr-Blanchard M."/>
            <person name="Klein C."/>
            <person name="Kobayashi Y."/>
            <person name="Koetter P."/>
            <person name="Koningstein G."/>
            <person name="Krogh S."/>
            <person name="Kumano M."/>
            <person name="Kurita K."/>
            <person name="Lapidus A."/>
            <person name="Lardinois S."/>
            <person name="Lauber J."/>
            <person name="Lazarevic V."/>
            <person name="Lee S.-M."/>
            <person name="Levine A."/>
            <person name="Liu H."/>
            <person name="Masuda S."/>
            <person name="Mauel C."/>
            <person name="Medigue C."/>
            <person name="Medina N."/>
            <person name="Mellado R.P."/>
            <person name="Mizuno M."/>
            <person name="Moestl D."/>
            <person name="Nakai S."/>
            <person name="Noback M."/>
            <person name="Noone D."/>
            <person name="O'Reilly M."/>
            <person name="Ogawa K."/>
            <person name="Ogiwara A."/>
            <person name="Oudega B."/>
            <person name="Park S.-H."/>
            <person name="Parro V."/>
            <person name="Pohl T.M."/>
            <person name="Portetelle D."/>
            <person name="Porwollik S."/>
            <person name="Prescott A.M."/>
            <person name="Presecan E."/>
            <person name="Pujic P."/>
            <person name="Purnelle B."/>
            <person name="Rapoport G."/>
            <person name="Rey M."/>
            <person name="Reynolds S."/>
            <person name="Rieger M."/>
            <person name="Rivolta C."/>
            <person name="Rocha E."/>
            <person name="Roche B."/>
            <person name="Rose M."/>
            <person name="Sadaie Y."/>
            <person name="Sato T."/>
            <person name="Scanlan E."/>
            <person name="Schleich S."/>
            <person name="Schroeter R."/>
            <person name="Scoffone F."/>
            <person name="Sekiguchi J."/>
            <person name="Sekowska A."/>
            <person name="Seror S.J."/>
            <person name="Serror P."/>
            <person name="Shin B.-S."/>
            <person name="Soldo B."/>
            <person name="Sorokin A."/>
            <person name="Tacconi E."/>
            <person name="Takagi T."/>
            <person name="Takahashi H."/>
            <person name="Takemaru K."/>
            <person name="Takeuchi M."/>
            <person name="Tamakoshi A."/>
            <person name="Tanaka T."/>
            <person name="Terpstra P."/>
            <person name="Tognoni A."/>
            <person name="Tosato V."/>
            <person name="Uchiyama S."/>
            <person name="Vandenbol M."/>
            <person name="Vannier F."/>
            <person name="Vassarotti A."/>
            <person name="Viari A."/>
            <person name="Wambutt R."/>
            <person name="Wedler E."/>
            <person name="Wedler H."/>
            <person name="Weitzenegger T."/>
            <person name="Winters P."/>
            <person name="Wipat A."/>
            <person name="Yamamoto H."/>
            <person name="Yamane K."/>
            <person name="Yasumoto K."/>
            <person name="Yata K."/>
            <person name="Yoshida K."/>
            <person name="Yoshikawa H.-F."/>
            <person name="Zumstein E."/>
            <person name="Yoshikawa H."/>
            <person name="Danchin A."/>
        </authorList>
    </citation>
    <scope>NUCLEOTIDE SEQUENCE [LARGE SCALE GENOMIC DNA]</scope>
    <source>
        <strain>168</strain>
    </source>
</reference>
<reference key="2">
    <citation type="journal article" date="1998" name="J. Bacteriol.">
        <title>New small, acid-soluble proteins unique to spores of Bacillus subtilis: identification of the coding genes and regulation and function of two of these genes.</title>
        <authorList>
            <person name="Bagyan I."/>
            <person name="Setlow B."/>
            <person name="Setlow P."/>
        </authorList>
    </citation>
    <scope>PROTEIN SEQUENCE OF 2-15</scope>
    <scope>DEVELOPMENTAL STAGE</scope>
    <scope>REGULATION OF EXPRESSION</scope>
</reference>
<evidence type="ECO:0000256" key="1">
    <source>
        <dbReference type="SAM" id="MobiDB-lite"/>
    </source>
</evidence>
<evidence type="ECO:0000269" key="2">
    <source>
    </source>
</evidence>
<sequence>MSENRHENEENRRDAAVAKVQNSGNAKVVVSVNTDQDQAQAQSQDGED</sequence>
<gene>
    <name type="primary">sspG</name>
    <name type="ordered locus">BSU32640</name>
</gene>
<accession>Q7WY59</accession>
<keyword id="KW-0903">Direct protein sequencing</keyword>
<keyword id="KW-1185">Reference proteome</keyword>
<keyword id="KW-0749">Sporulation</keyword>
<proteinExistence type="evidence at protein level"/>
<name>SSPG_BACSU</name>
<feature type="initiator methionine" description="Removed" evidence="2">
    <location>
        <position position="1"/>
    </location>
</feature>
<feature type="chain" id="PRO_0000072222" description="Small, acid-soluble spore protein G">
    <location>
        <begin position="2"/>
        <end position="48"/>
    </location>
</feature>
<feature type="region of interest" description="Disordered" evidence="1">
    <location>
        <begin position="1"/>
        <end position="48"/>
    </location>
</feature>
<feature type="compositionally biased region" description="Basic and acidic residues" evidence="1">
    <location>
        <begin position="1"/>
        <end position="16"/>
    </location>
</feature>
<feature type="compositionally biased region" description="Low complexity" evidence="1">
    <location>
        <begin position="35"/>
        <end position="48"/>
    </location>
</feature>
<protein>
    <recommendedName>
        <fullName>Small, acid-soluble spore protein G</fullName>
        <shortName>SASP G</shortName>
    </recommendedName>
</protein>
<dbReference type="EMBL" id="AL009126">
    <property type="protein sequence ID" value="CAE01466.1"/>
    <property type="molecule type" value="Genomic_DNA"/>
</dbReference>
<dbReference type="RefSeq" id="WP_003228613.1">
    <property type="nucleotide sequence ID" value="NZ_OZ025638.1"/>
</dbReference>
<dbReference type="RefSeq" id="YP_054592.1">
    <property type="nucleotide sequence ID" value="NC_000964.3"/>
</dbReference>
<dbReference type="FunCoup" id="Q7WY59">
    <property type="interactions" value="16"/>
</dbReference>
<dbReference type="STRING" id="224308.BSU32640"/>
<dbReference type="PaxDb" id="224308-BSU32640"/>
<dbReference type="EnsemblBacteria" id="CAE01466">
    <property type="protein sequence ID" value="CAE01466"/>
    <property type="gene ID" value="BSU_32640"/>
</dbReference>
<dbReference type="GeneID" id="2914218"/>
<dbReference type="KEGG" id="bsu:BSU32640"/>
<dbReference type="PATRIC" id="fig|224308.179.peg.3534"/>
<dbReference type="InParanoid" id="Q7WY59"/>
<dbReference type="BioCyc" id="BSUB:BSU32640-MONOMER"/>
<dbReference type="Proteomes" id="UP000001570">
    <property type="component" value="Chromosome"/>
</dbReference>
<dbReference type="GO" id="GO:0030435">
    <property type="term" value="P:sporulation resulting in formation of a cellular spore"/>
    <property type="evidence" value="ECO:0007669"/>
    <property type="project" value="UniProtKB-KW"/>
</dbReference>